<dbReference type="EMBL" id="FO080476">
    <property type="protein sequence ID" value="CCD63982.1"/>
    <property type="molecule type" value="Genomic_DNA"/>
</dbReference>
<dbReference type="PIR" id="T26095">
    <property type="entry name" value="T26095"/>
</dbReference>
<dbReference type="RefSeq" id="NP_497234.1">
    <property type="nucleotide sequence ID" value="NM_064833.1"/>
</dbReference>
<dbReference type="PaxDb" id="6239-W02B3.3"/>
<dbReference type="EnsemblMetazoa" id="W02B3.3.1">
    <property type="protein sequence ID" value="W02B3.3.1"/>
    <property type="gene ID" value="WBGene00020923"/>
</dbReference>
<dbReference type="GeneID" id="189103"/>
<dbReference type="KEGG" id="cel:CELE_W02B3.3"/>
<dbReference type="UCSC" id="W02B3.3">
    <property type="organism name" value="c. elegans"/>
</dbReference>
<dbReference type="AGR" id="WB:WBGene00020923"/>
<dbReference type="CTD" id="189103"/>
<dbReference type="WormBase" id="W02B3.3">
    <property type="protein sequence ID" value="CE02075"/>
    <property type="gene ID" value="WBGene00020923"/>
</dbReference>
<dbReference type="HOGENOM" id="CLU_2160656_0_0_1"/>
<dbReference type="InParanoid" id="Q09340"/>
<dbReference type="PRO" id="PR:Q09340"/>
<dbReference type="Proteomes" id="UP000001940">
    <property type="component" value="Chromosome III"/>
</dbReference>
<proteinExistence type="predicted"/>
<accession>Q09340</accession>
<evidence type="ECO:0000256" key="1">
    <source>
        <dbReference type="SAM" id="MobiDB-lite"/>
    </source>
</evidence>
<protein>
    <recommendedName>
        <fullName>Uncharacterized protein W02B3.3</fullName>
    </recommendedName>
</protein>
<name>YR23_CAEEL</name>
<reference key="1">
    <citation type="journal article" date="1998" name="Science">
        <title>Genome sequence of the nematode C. elegans: a platform for investigating biology.</title>
        <authorList>
            <consortium name="The C. elegans sequencing consortium"/>
        </authorList>
    </citation>
    <scope>NUCLEOTIDE SEQUENCE [LARGE SCALE GENOMIC DNA]</scope>
    <source>
        <strain>Bristol N2</strain>
    </source>
</reference>
<organism>
    <name type="scientific">Caenorhabditis elegans</name>
    <dbReference type="NCBI Taxonomy" id="6239"/>
    <lineage>
        <taxon>Eukaryota</taxon>
        <taxon>Metazoa</taxon>
        <taxon>Ecdysozoa</taxon>
        <taxon>Nematoda</taxon>
        <taxon>Chromadorea</taxon>
        <taxon>Rhabditida</taxon>
        <taxon>Rhabditina</taxon>
        <taxon>Rhabditomorpha</taxon>
        <taxon>Rhabditoidea</taxon>
        <taxon>Rhabditidae</taxon>
        <taxon>Peloderinae</taxon>
        <taxon>Caenorhabditis</taxon>
    </lineage>
</organism>
<feature type="chain" id="PRO_0000065489" description="Uncharacterized protein W02B3.3">
    <location>
        <begin position="1"/>
        <end position="111"/>
    </location>
</feature>
<feature type="region of interest" description="Disordered" evidence="1">
    <location>
        <begin position="1"/>
        <end position="26"/>
    </location>
</feature>
<keyword id="KW-1185">Reference proteome</keyword>
<gene>
    <name type="ORF">W02B3.3</name>
</gene>
<sequence length="111" mass="12196">MDLKDGVEEEEGAGENGKGGTHAQRVSDTHLRCLPFLARKERETNFDTSMLSAGMNQLLDLEDYMFQRIQGPEEPSAETSVGGFCDDRLCQYGNMFSGYGACGTYFAPEAP</sequence>